<feature type="chain" id="PRO_0000122264" description="Small ribosomal subunit protein eS8">
    <location>
        <begin position="1"/>
        <end position="123"/>
    </location>
</feature>
<feature type="region of interest" description="Disordered" evidence="1">
    <location>
        <begin position="1"/>
        <end position="38"/>
    </location>
</feature>
<feature type="compositionally biased region" description="Basic residues" evidence="1">
    <location>
        <begin position="7"/>
        <end position="26"/>
    </location>
</feature>
<sequence length="123" mass="13549">MKDQGRSPRKRTGGRRRPNHKKKKHELGKDTVETQVGEQRLKTVDSRGNTQKVRAVKTDVASIADGAETIEATIENVVENPSNPNYARRNIITKGAILETSEGQARVTSRPGQHGQVNAVLVE</sequence>
<organism>
    <name type="scientific">Haloarcula marismortui (strain ATCC 43049 / DSM 3752 / JCM 8966 / VKM B-1809)</name>
    <name type="common">Halobacterium marismortui</name>
    <dbReference type="NCBI Taxonomy" id="272569"/>
    <lineage>
        <taxon>Archaea</taxon>
        <taxon>Methanobacteriati</taxon>
        <taxon>Methanobacteriota</taxon>
        <taxon>Stenosarchaea group</taxon>
        <taxon>Halobacteria</taxon>
        <taxon>Halobacteriales</taxon>
        <taxon>Haloarculaceae</taxon>
        <taxon>Haloarcula</taxon>
    </lineage>
</organism>
<reference key="1">
    <citation type="journal article" date="1995" name="J. Protein Chem.">
        <title>Amino acid sequence of the ribosomal protein HS23 from the halophilic Haloarcula marismortui and homology studies to other ribosomal proteins.</title>
        <authorList>
            <person name="Engemann S."/>
            <person name="Herfurth E."/>
            <person name="Briesemeister U."/>
            <person name="Wittmann-Liebold B."/>
        </authorList>
    </citation>
    <scope>PROTEIN SEQUENCE</scope>
    <scope>MASS SPECTROMETRY</scope>
</reference>
<reference key="2">
    <citation type="journal article" date="2004" name="Genome Res.">
        <title>Genome sequence of Haloarcula marismortui: a halophilic archaeon from the Dead Sea.</title>
        <authorList>
            <person name="Baliga N.S."/>
            <person name="Bonneau R."/>
            <person name="Facciotti M.T."/>
            <person name="Pan M."/>
            <person name="Glusman G."/>
            <person name="Deutsch E.W."/>
            <person name="Shannon P."/>
            <person name="Chiu Y."/>
            <person name="Weng R.S."/>
            <person name="Gan R.R."/>
            <person name="Hung P."/>
            <person name="Date S.V."/>
            <person name="Marcotte E."/>
            <person name="Hood L."/>
            <person name="Ng W.V."/>
        </authorList>
    </citation>
    <scope>NUCLEOTIDE SEQUENCE [LARGE SCALE GENOMIC DNA]</scope>
    <source>
        <strain>ATCC 43049 / DSM 3752 / JCM 8966 / VKM B-1809</strain>
    </source>
</reference>
<comment type="subunit">
    <text>Part of the 30S ribosomal subunit.</text>
</comment>
<comment type="mass spectrometry" mass="13552.4" error="13.0" method="Electrospray" evidence="2"/>
<comment type="similarity">
    <text evidence="3">Belongs to the eukaryotic ribosomal protein eS8 family.</text>
</comment>
<proteinExistence type="evidence at protein level"/>
<gene>
    <name type="primary">rps8e</name>
    <name type="ordered locus">rrnAC1511</name>
</gene>
<dbReference type="EMBL" id="AY596297">
    <property type="protein sequence ID" value="AAV46432.1"/>
    <property type="molecule type" value="Genomic_DNA"/>
</dbReference>
<dbReference type="PIR" id="S49022">
    <property type="entry name" value="S49022"/>
</dbReference>
<dbReference type="RefSeq" id="WP_004957203.1">
    <property type="nucleotide sequence ID" value="NZ_CP039138.1"/>
</dbReference>
<dbReference type="SMR" id="P49402"/>
<dbReference type="STRING" id="272569.rrnAC1511"/>
<dbReference type="PaxDb" id="272569-rrnAC1511"/>
<dbReference type="EnsemblBacteria" id="AAV46432">
    <property type="protein sequence ID" value="AAV46432"/>
    <property type="gene ID" value="rrnAC1511"/>
</dbReference>
<dbReference type="KEGG" id="hma:rrnAC1511"/>
<dbReference type="PATRIC" id="fig|272569.17.peg.2199"/>
<dbReference type="eggNOG" id="arCOG04154">
    <property type="taxonomic scope" value="Archaea"/>
</dbReference>
<dbReference type="HOGENOM" id="CLU_080597_2_1_2"/>
<dbReference type="Proteomes" id="UP000001169">
    <property type="component" value="Chromosome I"/>
</dbReference>
<dbReference type="GO" id="GO:1990904">
    <property type="term" value="C:ribonucleoprotein complex"/>
    <property type="evidence" value="ECO:0007669"/>
    <property type="project" value="UniProtKB-KW"/>
</dbReference>
<dbReference type="GO" id="GO:0005840">
    <property type="term" value="C:ribosome"/>
    <property type="evidence" value="ECO:0007669"/>
    <property type="project" value="UniProtKB-KW"/>
</dbReference>
<dbReference type="GO" id="GO:0003735">
    <property type="term" value="F:structural constituent of ribosome"/>
    <property type="evidence" value="ECO:0007669"/>
    <property type="project" value="InterPro"/>
</dbReference>
<dbReference type="GO" id="GO:0006412">
    <property type="term" value="P:translation"/>
    <property type="evidence" value="ECO:0007669"/>
    <property type="project" value="UniProtKB-UniRule"/>
</dbReference>
<dbReference type="CDD" id="cd11382">
    <property type="entry name" value="Ribosomal_S8e"/>
    <property type="match status" value="1"/>
</dbReference>
<dbReference type="Gene3D" id="2.40.10.310">
    <property type="match status" value="1"/>
</dbReference>
<dbReference type="HAMAP" id="MF_00029">
    <property type="entry name" value="Ribosomal_eS8"/>
    <property type="match status" value="1"/>
</dbReference>
<dbReference type="InterPro" id="IPR001047">
    <property type="entry name" value="Ribosomal_eS8"/>
</dbReference>
<dbReference type="InterPro" id="IPR018283">
    <property type="entry name" value="Ribosomal_eS8_CS"/>
</dbReference>
<dbReference type="InterPro" id="IPR020919">
    <property type="entry name" value="Ribosomal_protein_eS8_arc"/>
</dbReference>
<dbReference type="InterPro" id="IPR022309">
    <property type="entry name" value="Ribosomal_Se8/biogenesis_NSA2"/>
</dbReference>
<dbReference type="NCBIfam" id="TIGR00307">
    <property type="entry name" value="eS8"/>
    <property type="match status" value="1"/>
</dbReference>
<dbReference type="PANTHER" id="PTHR10394">
    <property type="entry name" value="40S RIBOSOMAL PROTEIN S8"/>
    <property type="match status" value="1"/>
</dbReference>
<dbReference type="Pfam" id="PF01201">
    <property type="entry name" value="Ribosomal_S8e"/>
    <property type="match status" value="1"/>
</dbReference>
<dbReference type="PROSITE" id="PS01193">
    <property type="entry name" value="RIBOSOMAL_S8E"/>
    <property type="match status" value="1"/>
</dbReference>
<keyword id="KW-0903">Direct protein sequencing</keyword>
<keyword id="KW-1185">Reference proteome</keyword>
<keyword id="KW-0687">Ribonucleoprotein</keyword>
<keyword id="KW-0689">Ribosomal protein</keyword>
<protein>
    <recommendedName>
        <fullName evidence="3">Small ribosomal subunit protein eS8</fullName>
    </recommendedName>
    <alternativeName>
        <fullName>30S ribosomal protein S8e</fullName>
    </alternativeName>
    <alternativeName>
        <fullName>HS23</fullName>
    </alternativeName>
</protein>
<accession>P49402</accession>
<accession>Q5V220</accession>
<name>RS8E_HALMA</name>
<evidence type="ECO:0000256" key="1">
    <source>
        <dbReference type="SAM" id="MobiDB-lite"/>
    </source>
</evidence>
<evidence type="ECO:0000269" key="2">
    <source>
    </source>
</evidence>
<evidence type="ECO:0000305" key="3"/>